<proteinExistence type="inferred from homology"/>
<reference key="1">
    <citation type="journal article" date="2009" name="Appl. Environ. Microbiol.">
        <title>Novel features of the polysaccharide-digesting gliding bacterium Flavobacterium johnsoniae as revealed by genome sequence analysis.</title>
        <authorList>
            <person name="McBride M.J."/>
            <person name="Xie G."/>
            <person name="Martens E.C."/>
            <person name="Lapidus A."/>
            <person name="Henrissat B."/>
            <person name="Rhodes R.G."/>
            <person name="Goltsman E."/>
            <person name="Wang W."/>
            <person name="Xu J."/>
            <person name="Hunnicutt D.W."/>
            <person name="Staroscik A.M."/>
            <person name="Hoover T.R."/>
            <person name="Cheng Y.Q."/>
            <person name="Stein J.L."/>
        </authorList>
    </citation>
    <scope>NUCLEOTIDE SEQUENCE [LARGE SCALE GENOMIC DNA]</scope>
    <source>
        <strain>ATCC 17061 / DSM 2064 / JCM 8514 / BCRC 14874 / CCUG 350202 / NBRC 14942 / NCIMB 11054 / UW101</strain>
    </source>
</reference>
<feature type="chain" id="PRO_1000076355" description="Tryptophan synthase alpha chain">
    <location>
        <begin position="1"/>
        <end position="253"/>
    </location>
</feature>
<feature type="active site" description="Proton acceptor" evidence="1">
    <location>
        <position position="45"/>
    </location>
</feature>
<feature type="active site" description="Proton acceptor" evidence="1">
    <location>
        <position position="56"/>
    </location>
</feature>
<evidence type="ECO:0000255" key="1">
    <source>
        <dbReference type="HAMAP-Rule" id="MF_00131"/>
    </source>
</evidence>
<dbReference type="EC" id="4.2.1.20" evidence="1"/>
<dbReference type="EMBL" id="CP000685">
    <property type="protein sequence ID" value="ABQ07898.1"/>
    <property type="molecule type" value="Genomic_DNA"/>
</dbReference>
<dbReference type="RefSeq" id="WP_012026864.1">
    <property type="nucleotide sequence ID" value="NC_009441.1"/>
</dbReference>
<dbReference type="SMR" id="A5FA76"/>
<dbReference type="STRING" id="376686.Fjoh_4899"/>
<dbReference type="KEGG" id="fjo:Fjoh_4899"/>
<dbReference type="eggNOG" id="COG0159">
    <property type="taxonomic scope" value="Bacteria"/>
</dbReference>
<dbReference type="HOGENOM" id="CLU_016734_0_0_10"/>
<dbReference type="OrthoDB" id="9804578at2"/>
<dbReference type="UniPathway" id="UPA00035">
    <property type="reaction ID" value="UER00044"/>
</dbReference>
<dbReference type="Proteomes" id="UP000006694">
    <property type="component" value="Chromosome"/>
</dbReference>
<dbReference type="GO" id="GO:0005829">
    <property type="term" value="C:cytosol"/>
    <property type="evidence" value="ECO:0007669"/>
    <property type="project" value="TreeGrafter"/>
</dbReference>
<dbReference type="GO" id="GO:0004834">
    <property type="term" value="F:tryptophan synthase activity"/>
    <property type="evidence" value="ECO:0007669"/>
    <property type="project" value="UniProtKB-UniRule"/>
</dbReference>
<dbReference type="CDD" id="cd04724">
    <property type="entry name" value="Tryptophan_synthase_alpha"/>
    <property type="match status" value="1"/>
</dbReference>
<dbReference type="FunFam" id="3.20.20.70:FF:000037">
    <property type="entry name" value="Tryptophan synthase alpha chain"/>
    <property type="match status" value="1"/>
</dbReference>
<dbReference type="Gene3D" id="3.20.20.70">
    <property type="entry name" value="Aldolase class I"/>
    <property type="match status" value="1"/>
</dbReference>
<dbReference type="HAMAP" id="MF_00131">
    <property type="entry name" value="Trp_synth_alpha"/>
    <property type="match status" value="1"/>
</dbReference>
<dbReference type="InterPro" id="IPR013785">
    <property type="entry name" value="Aldolase_TIM"/>
</dbReference>
<dbReference type="InterPro" id="IPR011060">
    <property type="entry name" value="RibuloseP-bd_barrel"/>
</dbReference>
<dbReference type="InterPro" id="IPR018204">
    <property type="entry name" value="Trp_synthase_alpha_AS"/>
</dbReference>
<dbReference type="InterPro" id="IPR002028">
    <property type="entry name" value="Trp_synthase_suA"/>
</dbReference>
<dbReference type="NCBIfam" id="TIGR00262">
    <property type="entry name" value="trpA"/>
    <property type="match status" value="1"/>
</dbReference>
<dbReference type="PANTHER" id="PTHR43406:SF1">
    <property type="entry name" value="TRYPTOPHAN SYNTHASE ALPHA CHAIN, CHLOROPLASTIC"/>
    <property type="match status" value="1"/>
</dbReference>
<dbReference type="PANTHER" id="PTHR43406">
    <property type="entry name" value="TRYPTOPHAN SYNTHASE, ALPHA CHAIN"/>
    <property type="match status" value="1"/>
</dbReference>
<dbReference type="Pfam" id="PF00290">
    <property type="entry name" value="Trp_syntA"/>
    <property type="match status" value="1"/>
</dbReference>
<dbReference type="SUPFAM" id="SSF51366">
    <property type="entry name" value="Ribulose-phoshate binding barrel"/>
    <property type="match status" value="1"/>
</dbReference>
<dbReference type="PROSITE" id="PS00167">
    <property type="entry name" value="TRP_SYNTHASE_ALPHA"/>
    <property type="match status" value="1"/>
</dbReference>
<keyword id="KW-0028">Amino-acid biosynthesis</keyword>
<keyword id="KW-0057">Aromatic amino acid biosynthesis</keyword>
<keyword id="KW-0456">Lyase</keyword>
<keyword id="KW-0822">Tryptophan biosynthesis</keyword>
<accession>A5FA76</accession>
<comment type="function">
    <text evidence="1">The alpha subunit is responsible for the aldol cleavage of indoleglycerol phosphate to indole and glyceraldehyde 3-phosphate.</text>
</comment>
<comment type="catalytic activity">
    <reaction evidence="1">
        <text>(1S,2R)-1-C-(indol-3-yl)glycerol 3-phosphate + L-serine = D-glyceraldehyde 3-phosphate + L-tryptophan + H2O</text>
        <dbReference type="Rhea" id="RHEA:10532"/>
        <dbReference type="ChEBI" id="CHEBI:15377"/>
        <dbReference type="ChEBI" id="CHEBI:33384"/>
        <dbReference type="ChEBI" id="CHEBI:57912"/>
        <dbReference type="ChEBI" id="CHEBI:58866"/>
        <dbReference type="ChEBI" id="CHEBI:59776"/>
        <dbReference type="EC" id="4.2.1.20"/>
    </reaction>
</comment>
<comment type="pathway">
    <text evidence="1">Amino-acid biosynthesis; L-tryptophan biosynthesis; L-tryptophan from chorismate: step 5/5.</text>
</comment>
<comment type="subunit">
    <text evidence="1">Tetramer of two alpha and two beta chains.</text>
</comment>
<comment type="similarity">
    <text evidence="1">Belongs to the TrpA family.</text>
</comment>
<organism>
    <name type="scientific">Flavobacterium johnsoniae (strain ATCC 17061 / DSM 2064 / JCM 8514 / BCRC 14874 / CCUG 350202 / NBRC 14942 / NCIMB 11054 / UW101)</name>
    <name type="common">Cytophaga johnsonae</name>
    <dbReference type="NCBI Taxonomy" id="376686"/>
    <lineage>
        <taxon>Bacteria</taxon>
        <taxon>Pseudomonadati</taxon>
        <taxon>Bacteroidota</taxon>
        <taxon>Flavobacteriia</taxon>
        <taxon>Flavobacteriales</taxon>
        <taxon>Flavobacteriaceae</taxon>
        <taxon>Flavobacterium</taxon>
    </lineage>
</organism>
<sequence length="253" mass="28043">MNRITQKLQEDKKILSIYFSAGYPNLNDTVQIIQDLEKNGVDLIEIGLPFSDPLADGPTIQASSTQALHNGMTTQILFDQLQNIRESVKIPLIIMGYFNPMLQYGVEAFCKKCAEIGIDGLIIPDLPVDVYADEYKAIFEKYGLINVFLITPQTSDERIRFIDSVSNGFIYMVSSASVTGSQSGFGNVQETYFERISNLNLKNPQIVGFGISNKETFNQATKYAKGAIIGSAFIKHLSESGSGKIQEFVGEIR</sequence>
<name>TRPA_FLAJ1</name>
<protein>
    <recommendedName>
        <fullName evidence="1">Tryptophan synthase alpha chain</fullName>
        <ecNumber evidence="1">4.2.1.20</ecNumber>
    </recommendedName>
</protein>
<gene>
    <name evidence="1" type="primary">trpA</name>
    <name type="ordered locus">Fjoh_4899</name>
</gene>